<protein>
    <recommendedName>
        <fullName evidence="9">Magnesium-protoporphyrin IX monomethyl ester [oxidative] cyclase, chloroplastic</fullName>
        <shortName evidence="9">Mg-protoporphyrin IX monomethyl ester oxidative cyclase</shortName>
        <ecNumber evidence="4">1.14.13.81</ecNumber>
    </recommendedName>
    <alternativeName>
        <fullName evidence="8">Copper response defect 1 protein</fullName>
        <shortName evidence="8">AtCrd1</shortName>
    </alternativeName>
    <alternativeName>
        <fullName evidence="12">Dicarboxylate diiron protein</fullName>
        <shortName evidence="12">AtZIP</shortName>
    </alternativeName>
    <alternativeName>
        <fullName>MPE-cyclase</fullName>
    </alternativeName>
</protein>
<organism>
    <name type="scientific">Arabidopsis thaliana</name>
    <name type="common">Mouse-ear cress</name>
    <dbReference type="NCBI Taxonomy" id="3702"/>
    <lineage>
        <taxon>Eukaryota</taxon>
        <taxon>Viridiplantae</taxon>
        <taxon>Streptophyta</taxon>
        <taxon>Embryophyta</taxon>
        <taxon>Tracheophyta</taxon>
        <taxon>Spermatophyta</taxon>
        <taxon>Magnoliopsida</taxon>
        <taxon>eudicotyledons</taxon>
        <taxon>Gunneridae</taxon>
        <taxon>Pentapetalae</taxon>
        <taxon>rosids</taxon>
        <taxon>malvids</taxon>
        <taxon>Brassicales</taxon>
        <taxon>Brassicaceae</taxon>
        <taxon>Camelineae</taxon>
        <taxon>Arabidopsis</taxon>
    </lineage>
</organism>
<proteinExistence type="evidence at protein level"/>
<evidence type="ECO:0000250" key="1"/>
<evidence type="ECO:0000255" key="2"/>
<evidence type="ECO:0000256" key="3">
    <source>
        <dbReference type="SAM" id="MobiDB-lite"/>
    </source>
</evidence>
<evidence type="ECO:0000269" key="4">
    <source>
    </source>
</evidence>
<evidence type="ECO:0000269" key="5">
    <source>
    </source>
</evidence>
<evidence type="ECO:0000269" key="6">
    <source>
    </source>
</evidence>
<evidence type="ECO:0000269" key="7">
    <source>
    </source>
</evidence>
<evidence type="ECO:0000303" key="8">
    <source>
    </source>
</evidence>
<evidence type="ECO:0000303" key="9">
    <source>
    </source>
</evidence>
<evidence type="ECO:0000303" key="10">
    <source>
    </source>
</evidence>
<evidence type="ECO:0000303" key="11">
    <source>
    </source>
</evidence>
<evidence type="ECO:0000303" key="12">
    <source>
    </source>
</evidence>
<evidence type="ECO:0000303" key="13">
    <source ref="5"/>
</evidence>
<evidence type="ECO:0000305" key="14"/>
<evidence type="ECO:0000305" key="15">
    <source>
    </source>
</evidence>
<evidence type="ECO:0000312" key="16">
    <source>
        <dbReference type="Araport" id="AT3G56940"/>
    </source>
</evidence>
<evidence type="ECO:0000312" key="17">
    <source>
        <dbReference type="EMBL" id="CAB72164.1"/>
    </source>
</evidence>
<keyword id="KW-0025">Alternative splicing</keyword>
<keyword id="KW-0149">Chlorophyll biosynthesis</keyword>
<keyword id="KW-0150">Chloroplast</keyword>
<keyword id="KW-0408">Iron</keyword>
<keyword id="KW-0472">Membrane</keyword>
<keyword id="KW-0479">Metal-binding</keyword>
<keyword id="KW-0521">NADP</keyword>
<keyword id="KW-0560">Oxidoreductase</keyword>
<keyword id="KW-0602">Photosynthesis</keyword>
<keyword id="KW-0934">Plastid</keyword>
<keyword id="KW-1001">Plastid inner membrane</keyword>
<keyword id="KW-1185">Reference proteome</keyword>
<keyword id="KW-0793">Thylakoid</keyword>
<keyword id="KW-0809">Transit peptide</keyword>
<comment type="function">
    <text evidence="4 5 7">Catalytic component of the MgProto monomethylester (MgProtoME) cyclase complex that catalyzes the formation of the isocyclic ring in chlorophyll biosynthesis (PubMed:14673103, PubMed:18682427, PubMed:29443418). Mediates the cyclase reaction, which results in the formation of divinylprotochlorophyllide (Pchlide) characteristic of all chlorophylls from magnesium-protoporphyrin IX 13-monomethyl ester (MgPMME) (PubMed:14673103, PubMed:18682427, PubMed:29443418).</text>
</comment>
<comment type="catalytic activity">
    <reaction evidence="4">
        <text>Mg-protoporphyrin IX 13-monomethyl ester + 3 NADPH + 3 O2 + 2 H(+) = 3,8-divinyl protochlorophyllide a + 3 NADP(+) + 5 H2O</text>
        <dbReference type="Rhea" id="RHEA:33235"/>
        <dbReference type="ChEBI" id="CHEBI:15377"/>
        <dbReference type="ChEBI" id="CHEBI:15378"/>
        <dbReference type="ChEBI" id="CHEBI:15379"/>
        <dbReference type="ChEBI" id="CHEBI:57783"/>
        <dbReference type="ChEBI" id="CHEBI:58349"/>
        <dbReference type="ChEBI" id="CHEBI:58632"/>
        <dbReference type="ChEBI" id="CHEBI:60491"/>
        <dbReference type="EC" id="1.14.13.81"/>
    </reaction>
</comment>
<comment type="cofactor">
    <cofactor evidence="1">
        <name>Fe cation</name>
        <dbReference type="ChEBI" id="CHEBI:24875"/>
    </cofactor>
</comment>
<comment type="pathway">
    <text evidence="4">Porphyrin-containing compound metabolism; chlorophyll biosynthesis.</text>
</comment>
<comment type="subunit">
    <text evidence="6 7">Part of the FLU-containing chloroplast membrane complex composed of FLU, CRD1, PORB, PORC, CHLP and HEMA1 (PubMed:22212719). Interacts with YCF54 in chloroplasts (PubMed:29443418).</text>
</comment>
<comment type="interaction">
    <interactant intactId="EBI-7632098">
        <id>Q9M591</id>
    </interactant>
    <interactant intactId="EBI-2319882">
        <id>Q940U6</id>
        <label>FLU</label>
    </interactant>
    <organismsDiffer>false</organismsDiffer>
    <experiments>5</experiments>
</comment>
<comment type="subcellular location">
    <subcellularLocation>
        <location>Plastid</location>
        <location>Chloroplast inner membrane</location>
        <topology>Peripheral membrane protein</topology>
    </subcellularLocation>
    <subcellularLocation>
        <location>Plastid</location>
        <location>Chloroplast thylakoid membrane</location>
        <topology>Peripheral membrane protein</topology>
    </subcellularLocation>
</comment>
<comment type="alternative products">
    <event type="alternative splicing"/>
    <isoform>
        <id>Q9M591-1</id>
        <name>1</name>
        <sequence type="displayed"/>
    </isoform>
    <text>A number of isoforms are produced. According to EST sequences.</text>
</comment>
<comment type="miscellaneous">
    <text evidence="15">Knock-down mutant (chl27-t) grows slowly with a pale green appearance. Also confers severe defects in chloroplast development, including the unstacking of thylakoid membranes (PubMed:18682427).</text>
</comment>
<comment type="similarity">
    <text evidence="14">Belongs to the AcsF family.</text>
</comment>
<comment type="sequence caution" evidence="14">
    <conflict type="erroneous initiation">
        <sequence resource="EMBL-CDS" id="AAB18942"/>
    </conflict>
    <text>Truncated N-terminus.</text>
</comment>
<name>CRD1_ARATH</name>
<dbReference type="EC" id="1.14.13.81" evidence="4"/>
<dbReference type="EMBL" id="U38232">
    <property type="protein sequence ID" value="AAB18942.1"/>
    <property type="status" value="ALT_INIT"/>
    <property type="molecule type" value="mRNA"/>
</dbReference>
<dbReference type="EMBL" id="AF236101">
    <property type="protein sequence ID" value="AAF63476.1"/>
    <property type="molecule type" value="mRNA"/>
</dbReference>
<dbReference type="EMBL" id="AL138655">
    <property type="protein sequence ID" value="CAB72164.1"/>
    <property type="molecule type" value="Genomic_DNA"/>
</dbReference>
<dbReference type="EMBL" id="CP002686">
    <property type="protein sequence ID" value="AEE79589.1"/>
    <property type="molecule type" value="Genomic_DNA"/>
</dbReference>
<dbReference type="EMBL" id="AY170319">
    <property type="protein sequence ID" value="AAO11785.1"/>
    <property type="molecule type" value="Genomic_DNA"/>
</dbReference>
<dbReference type="EMBL" id="U75599">
    <property type="protein sequence ID" value="AAB51703.1"/>
    <property type="molecule type" value="mRNA"/>
</dbReference>
<dbReference type="PIR" id="T47754">
    <property type="entry name" value="T47754"/>
</dbReference>
<dbReference type="RefSeq" id="NP_191253.1">
    <molecule id="Q9M591-1"/>
    <property type="nucleotide sequence ID" value="NM_115553.4"/>
</dbReference>
<dbReference type="BioGRID" id="10177">
    <property type="interactions" value="1"/>
</dbReference>
<dbReference type="FunCoup" id="Q9M591">
    <property type="interactions" value="1072"/>
</dbReference>
<dbReference type="IntAct" id="Q9M591">
    <property type="interactions" value="2"/>
</dbReference>
<dbReference type="MINT" id="Q9M591"/>
<dbReference type="STRING" id="3702.Q9M591"/>
<dbReference type="GlyGen" id="Q9M591">
    <property type="glycosylation" value="1 site"/>
</dbReference>
<dbReference type="iPTMnet" id="Q9M591"/>
<dbReference type="PaxDb" id="3702-AT3G56940.1"/>
<dbReference type="ProteomicsDB" id="224494">
    <molecule id="Q9M591-1"/>
</dbReference>
<dbReference type="EnsemblPlants" id="AT3G56940.1">
    <molecule id="Q9M591-1"/>
    <property type="protein sequence ID" value="AT3G56940.1"/>
    <property type="gene ID" value="AT3G56940"/>
</dbReference>
<dbReference type="GeneID" id="824861"/>
<dbReference type="Gramene" id="AT3G56940.1">
    <molecule id="Q9M591-1"/>
    <property type="protein sequence ID" value="AT3G56940.1"/>
    <property type="gene ID" value="AT3G56940"/>
</dbReference>
<dbReference type="KEGG" id="ath:AT3G56940"/>
<dbReference type="Araport" id="AT3G56940"/>
<dbReference type="TAIR" id="AT3G56940">
    <property type="gene designation" value="CRD1"/>
</dbReference>
<dbReference type="eggNOG" id="ENOG502QRIH">
    <property type="taxonomic scope" value="Eukaryota"/>
</dbReference>
<dbReference type="InParanoid" id="Q9M591"/>
<dbReference type="OrthoDB" id="524174at2759"/>
<dbReference type="PhylomeDB" id="Q9M591"/>
<dbReference type="BioCyc" id="ARA:AT3G56940-MONOMER"/>
<dbReference type="BioCyc" id="MetaCyc:AT3G56940-MONOMER"/>
<dbReference type="BRENDA" id="1.14.13.81">
    <property type="organism ID" value="399"/>
</dbReference>
<dbReference type="UniPathway" id="UPA00668"/>
<dbReference type="CD-CODE" id="4299E36E">
    <property type="entry name" value="Nucleolus"/>
</dbReference>
<dbReference type="PRO" id="PR:Q9M591"/>
<dbReference type="Proteomes" id="UP000006548">
    <property type="component" value="Chromosome 3"/>
</dbReference>
<dbReference type="ExpressionAtlas" id="Q9M591">
    <property type="expression patterns" value="baseline and differential"/>
</dbReference>
<dbReference type="GO" id="GO:0009507">
    <property type="term" value="C:chloroplast"/>
    <property type="evidence" value="ECO:0007005"/>
    <property type="project" value="TAIR"/>
</dbReference>
<dbReference type="GO" id="GO:0009941">
    <property type="term" value="C:chloroplast envelope"/>
    <property type="evidence" value="ECO:0007005"/>
    <property type="project" value="TAIR"/>
</dbReference>
<dbReference type="GO" id="GO:0009706">
    <property type="term" value="C:chloroplast inner membrane"/>
    <property type="evidence" value="ECO:0000314"/>
    <property type="project" value="TAIR"/>
</dbReference>
<dbReference type="GO" id="GO:0009534">
    <property type="term" value="C:chloroplast thylakoid"/>
    <property type="evidence" value="ECO:0007005"/>
    <property type="project" value="TAIR"/>
</dbReference>
<dbReference type="GO" id="GO:0009535">
    <property type="term" value="C:chloroplast thylakoid membrane"/>
    <property type="evidence" value="ECO:0000314"/>
    <property type="project" value="TAIR"/>
</dbReference>
<dbReference type="GO" id="GO:0003677">
    <property type="term" value="F:DNA binding"/>
    <property type="evidence" value="ECO:0000304"/>
    <property type="project" value="TAIR"/>
</dbReference>
<dbReference type="GO" id="GO:0048529">
    <property type="term" value="F:magnesium-protoporphyrin IX monomethyl ester (oxidative) cyclase activity"/>
    <property type="evidence" value="ECO:0000315"/>
    <property type="project" value="TAIR"/>
</dbReference>
<dbReference type="GO" id="GO:0046872">
    <property type="term" value="F:metal ion binding"/>
    <property type="evidence" value="ECO:0007669"/>
    <property type="project" value="UniProtKB-KW"/>
</dbReference>
<dbReference type="GO" id="GO:0003729">
    <property type="term" value="F:mRNA binding"/>
    <property type="evidence" value="ECO:0000314"/>
    <property type="project" value="TAIR"/>
</dbReference>
<dbReference type="GO" id="GO:0015995">
    <property type="term" value="P:chlorophyll biosynthetic process"/>
    <property type="evidence" value="ECO:0000315"/>
    <property type="project" value="TAIR"/>
</dbReference>
<dbReference type="GO" id="GO:0009658">
    <property type="term" value="P:chloroplast organization"/>
    <property type="evidence" value="ECO:0000315"/>
    <property type="project" value="TAIR"/>
</dbReference>
<dbReference type="GO" id="GO:0015979">
    <property type="term" value="P:photosynthesis"/>
    <property type="evidence" value="ECO:0007669"/>
    <property type="project" value="UniProtKB-KW"/>
</dbReference>
<dbReference type="GO" id="GO:1901401">
    <property type="term" value="P:regulation of tetrapyrrole metabolic process"/>
    <property type="evidence" value="ECO:0000315"/>
    <property type="project" value="TAIR"/>
</dbReference>
<dbReference type="CDD" id="cd01047">
    <property type="entry name" value="ACSF"/>
    <property type="match status" value="1"/>
</dbReference>
<dbReference type="HAMAP" id="MF_01840">
    <property type="entry name" value="AcsF"/>
    <property type="match status" value="1"/>
</dbReference>
<dbReference type="InterPro" id="IPR008434">
    <property type="entry name" value="AcsF"/>
</dbReference>
<dbReference type="InterPro" id="IPR009078">
    <property type="entry name" value="Ferritin-like_SF"/>
</dbReference>
<dbReference type="InterPro" id="IPR003251">
    <property type="entry name" value="Rr_diiron-bd_dom"/>
</dbReference>
<dbReference type="NCBIfam" id="TIGR02029">
    <property type="entry name" value="AcsF"/>
    <property type="match status" value="1"/>
</dbReference>
<dbReference type="NCBIfam" id="NF010172">
    <property type="entry name" value="PRK13654.1"/>
    <property type="match status" value="1"/>
</dbReference>
<dbReference type="PANTHER" id="PTHR31053">
    <property type="entry name" value="MAGNESIUM-PROTOPORPHYRIN IX MONOMETHYL ESTER [OXIDATIVE] CYCLASE, CHLOROPLASTIC"/>
    <property type="match status" value="1"/>
</dbReference>
<dbReference type="PANTHER" id="PTHR31053:SF2">
    <property type="entry name" value="MAGNESIUM-PROTOPORPHYRIN IX MONOMETHYL ESTER [OXIDATIVE] CYCLASE, CHLOROPLASTIC"/>
    <property type="match status" value="1"/>
</dbReference>
<dbReference type="Pfam" id="PF02915">
    <property type="entry name" value="Rubrerythrin"/>
    <property type="match status" value="1"/>
</dbReference>
<dbReference type="SUPFAM" id="SSF47240">
    <property type="entry name" value="Ferritin-like"/>
    <property type="match status" value="1"/>
</dbReference>
<feature type="transit peptide" description="Chloroplast" evidence="2">
    <location>
        <begin position="1"/>
        <end position="36"/>
    </location>
</feature>
<feature type="chain" id="PRO_0000000598" description="Magnesium-protoporphyrin IX monomethyl ester [oxidative] cyclase, chloroplastic">
    <location>
        <begin position="37"/>
        <end position="409"/>
    </location>
</feature>
<feature type="region of interest" description="Disordered" evidence="3">
    <location>
        <begin position="1"/>
        <end position="23"/>
    </location>
</feature>
<feature type="region of interest" description="Disordered" evidence="3">
    <location>
        <begin position="36"/>
        <end position="60"/>
    </location>
</feature>
<feature type="compositionally biased region" description="Polar residues" evidence="3">
    <location>
        <begin position="13"/>
        <end position="23"/>
    </location>
</feature>
<feature type="sequence conflict" description="In Ref. 1; AAB18942." evidence="14" ref="1">
    <original>F</original>
    <variation>I</variation>
    <location>
        <position position="14"/>
    </location>
</feature>
<feature type="sequence conflict" description="In Ref. 1; AAB18942." evidence="14" ref="1">
    <original>L</original>
    <variation>S</variation>
    <location>
        <position position="157"/>
    </location>
</feature>
<feature type="sequence conflict" description="In Ref. 6; AAB51703." evidence="14" ref="6">
    <original>TYLS</original>
    <variation>RAAR</variation>
    <location>
        <begin position="216"/>
        <end position="219"/>
    </location>
</feature>
<feature type="sequence conflict" description="In Ref. 2; AAF63476." evidence="14" ref="2">
    <original>C</original>
    <variation>W</variation>
    <location>
        <position position="299"/>
    </location>
</feature>
<feature type="sequence conflict" description="In Ref. 6; AAB51703." evidence="14" ref="6">
    <original>LNT</original>
    <variation>FKH</variation>
    <location>
        <begin position="310"/>
        <end position="312"/>
    </location>
</feature>
<reference key="1">
    <citation type="journal article" date="1998" name="Plant Physiol.">
        <title>PNZIP is a novel mesophyll-specific cDNA that is regulated by phytochrome and the circadian rhythm and encodes a protein with a leucine zipper motif.</title>
        <authorList>
            <person name="Zheng C.C."/>
            <person name="Porat R."/>
            <person name="Lu P."/>
            <person name="O'Neill S.D."/>
        </authorList>
    </citation>
    <scope>NUCLEOTIDE SEQUENCE [MRNA]</scope>
    <source>
        <tissue>Etiolated seedling</tissue>
    </source>
</reference>
<reference key="2">
    <citation type="journal article" date="2000" name="EMBO J.">
        <title>The Crd1 gene encodes a putative di-iron enzyme required for photosystem I accumulation in copper deficiency and hypoxia in Chlamydomonas reinhardtii.</title>
        <authorList>
            <person name="Moseley J.L."/>
            <person name="Quinn J."/>
            <person name="Eriksson M."/>
            <person name="Merchant S."/>
        </authorList>
    </citation>
    <scope>NUCLEOTIDE SEQUENCE [MRNA]</scope>
    <source>
        <strain>cv. Columbia</strain>
    </source>
</reference>
<reference key="3">
    <citation type="journal article" date="2000" name="Nature">
        <title>Sequence and analysis of chromosome 3 of the plant Arabidopsis thaliana.</title>
        <authorList>
            <person name="Salanoubat M."/>
            <person name="Lemcke K."/>
            <person name="Rieger M."/>
            <person name="Ansorge W."/>
            <person name="Unseld M."/>
            <person name="Fartmann B."/>
            <person name="Valle G."/>
            <person name="Bloecker H."/>
            <person name="Perez-Alonso M."/>
            <person name="Obermaier B."/>
            <person name="Delseny M."/>
            <person name="Boutry M."/>
            <person name="Grivell L.A."/>
            <person name="Mache R."/>
            <person name="Puigdomenech P."/>
            <person name="De Simone V."/>
            <person name="Choisne N."/>
            <person name="Artiguenave F."/>
            <person name="Robert C."/>
            <person name="Brottier P."/>
            <person name="Wincker P."/>
            <person name="Cattolico L."/>
            <person name="Weissenbach J."/>
            <person name="Saurin W."/>
            <person name="Quetier F."/>
            <person name="Schaefer M."/>
            <person name="Mueller-Auer S."/>
            <person name="Gabel C."/>
            <person name="Fuchs M."/>
            <person name="Benes V."/>
            <person name="Wurmbach E."/>
            <person name="Drzonek H."/>
            <person name="Erfle H."/>
            <person name="Jordan N."/>
            <person name="Bangert S."/>
            <person name="Wiedelmann R."/>
            <person name="Kranz H."/>
            <person name="Voss H."/>
            <person name="Holland R."/>
            <person name="Brandt P."/>
            <person name="Nyakatura G."/>
            <person name="Vezzi A."/>
            <person name="D'Angelo M."/>
            <person name="Pallavicini A."/>
            <person name="Toppo S."/>
            <person name="Simionati B."/>
            <person name="Conrad A."/>
            <person name="Hornischer K."/>
            <person name="Kauer G."/>
            <person name="Loehnert T.-H."/>
            <person name="Nordsiek G."/>
            <person name="Reichelt J."/>
            <person name="Scharfe M."/>
            <person name="Schoen O."/>
            <person name="Bargues M."/>
            <person name="Terol J."/>
            <person name="Climent J."/>
            <person name="Navarro P."/>
            <person name="Collado C."/>
            <person name="Perez-Perez A."/>
            <person name="Ottenwaelder B."/>
            <person name="Duchemin D."/>
            <person name="Cooke R."/>
            <person name="Laudie M."/>
            <person name="Berger-Llauro C."/>
            <person name="Purnelle B."/>
            <person name="Masuy D."/>
            <person name="de Haan M."/>
            <person name="Maarse A.C."/>
            <person name="Alcaraz J.-P."/>
            <person name="Cottet A."/>
            <person name="Casacuberta E."/>
            <person name="Monfort A."/>
            <person name="Argiriou A."/>
            <person name="Flores M."/>
            <person name="Liguori R."/>
            <person name="Vitale D."/>
            <person name="Mannhaupt G."/>
            <person name="Haase D."/>
            <person name="Schoof H."/>
            <person name="Rudd S."/>
            <person name="Zaccaria P."/>
            <person name="Mewes H.-W."/>
            <person name="Mayer K.F.X."/>
            <person name="Kaul S."/>
            <person name="Town C.D."/>
            <person name="Koo H.L."/>
            <person name="Tallon L.J."/>
            <person name="Jenkins J."/>
            <person name="Rooney T."/>
            <person name="Rizzo M."/>
            <person name="Walts A."/>
            <person name="Utterback T."/>
            <person name="Fujii C.Y."/>
            <person name="Shea T.P."/>
            <person name="Creasy T.H."/>
            <person name="Haas B."/>
            <person name="Maiti R."/>
            <person name="Wu D."/>
            <person name="Peterson J."/>
            <person name="Van Aken S."/>
            <person name="Pai G."/>
            <person name="Militscher J."/>
            <person name="Sellers P."/>
            <person name="Gill J.E."/>
            <person name="Feldblyum T.V."/>
            <person name="Preuss D."/>
            <person name="Lin X."/>
            <person name="Nierman W.C."/>
            <person name="Salzberg S.L."/>
            <person name="White O."/>
            <person name="Venter J.C."/>
            <person name="Fraser C.M."/>
            <person name="Kaneko T."/>
            <person name="Nakamura Y."/>
            <person name="Sato S."/>
            <person name="Kato T."/>
            <person name="Asamizu E."/>
            <person name="Sasamoto S."/>
            <person name="Kimura T."/>
            <person name="Idesawa K."/>
            <person name="Kawashima K."/>
            <person name="Kishida Y."/>
            <person name="Kiyokawa C."/>
            <person name="Kohara M."/>
            <person name="Matsumoto M."/>
            <person name="Matsuno A."/>
            <person name="Muraki A."/>
            <person name="Nakayama S."/>
            <person name="Nakazaki N."/>
            <person name="Shinpo S."/>
            <person name="Takeuchi C."/>
            <person name="Wada T."/>
            <person name="Watanabe A."/>
            <person name="Yamada M."/>
            <person name="Yasuda M."/>
            <person name="Tabata S."/>
        </authorList>
    </citation>
    <scope>NUCLEOTIDE SEQUENCE [LARGE SCALE GENOMIC DNA]</scope>
    <source>
        <strain>cv. Columbia</strain>
    </source>
</reference>
<reference key="4">
    <citation type="journal article" date="2017" name="Plant J.">
        <title>Araport11: a complete reannotation of the Arabidopsis thaliana reference genome.</title>
        <authorList>
            <person name="Cheng C.Y."/>
            <person name="Krishnakumar V."/>
            <person name="Chan A.P."/>
            <person name="Thibaud-Nissen F."/>
            <person name="Schobel S."/>
            <person name="Town C.D."/>
        </authorList>
    </citation>
    <scope>GENOME REANNOTATION</scope>
    <source>
        <strain>cv. Columbia</strain>
    </source>
</reference>
<reference key="5">
    <citation type="submission" date="2002-10" db="EMBL/GenBank/DDBJ databases">
        <title>Cloning and characteristics of AT103 gene promoter.</title>
        <authorList>
            <person name="Liu N."/>
            <person name="Zheng C."/>
        </authorList>
    </citation>
    <scope>NUCLEOTIDE SEQUENCE [MRNA] OF 1-76</scope>
</reference>
<reference key="6">
    <citation type="journal article" date="1997" name="Mol. Cells">
        <title>Isolation of molecular markers for salt stress responses in Arabidopsis thaliana.</title>
        <authorList>
            <person name="Pih K.T."/>
            <person name="Jang H.J."/>
            <person name="Kang S.G."/>
            <person name="Piao H.L."/>
            <person name="Hwang I."/>
        </authorList>
    </citation>
    <scope>NUCLEOTIDE SEQUENCE [MRNA] OF 215-313</scope>
    <source>
        <strain>cv. Columbia</strain>
    </source>
</reference>
<reference key="7">
    <citation type="journal article" date="2003" name="Proc. Natl. Acad. Sci. U.S.A.">
        <title>Arabidopsis CHL27, located in both envelope and thylakoid membranes, is required for the synthesis of protochlorophyllide.</title>
        <authorList>
            <person name="Tottey S."/>
            <person name="Block M.A."/>
            <person name="Allen M."/>
            <person name="Westergren T."/>
            <person name="Albrieux C."/>
            <person name="Scheller H.V."/>
            <person name="Merchant S."/>
            <person name="Jensen P.E."/>
        </authorList>
    </citation>
    <scope>FUNCTION</scope>
    <scope>ENZYME ACTIVITY</scope>
    <scope>SUBCELLULAR LOCATION</scope>
    <scope>PATHWAY</scope>
</reference>
<reference key="8">
    <citation type="journal article" date="2008" name="Plant Cell Physiol.">
        <title>Role of Arabidopsis CHL27 protein for photosynthesis, chloroplast development and gene expression profiling.</title>
        <authorList>
            <person name="Bang W.Y."/>
            <person name="Jeong I.S."/>
            <person name="Kim D.W."/>
            <person name="Im C.H."/>
            <person name="Ji C."/>
            <person name="Hwang S.M."/>
            <person name="Kim S.W."/>
            <person name="Son Y.S."/>
            <person name="Jeong J."/>
            <person name="Shiina T."/>
            <person name="Bahk J.D."/>
        </authorList>
    </citation>
    <scope>FUNCTION</scope>
</reference>
<reference key="9">
    <citation type="journal article" date="2012" name="FEBS Lett.">
        <title>FLU, a negative feedback regulator of tetrapyrrole biosynthesis, is physically linked to the final steps of the Mg(++)-branch of this pathway.</title>
        <authorList>
            <person name="Kauss D."/>
            <person name="Bischof S."/>
            <person name="Steiner S."/>
            <person name="Apel K."/>
            <person name="Meskauskiene R."/>
        </authorList>
    </citation>
    <scope>SUBCELLULAR LOCATION</scope>
    <scope>IDENTIFICATION IN THE FLU-CONTAINING CHLOROPLAST MEMBRANE COMPLEX</scope>
</reference>
<reference key="10">
    <citation type="journal article" date="2018" name="Plant J.">
        <title>Potential roles of YCF54 and ferredoxin-NADPH reductase for magnesium protoporphyrin monomethylester cyclase.</title>
        <authorList>
            <person name="Herbst J."/>
            <person name="Girke A."/>
            <person name="Hajirezaei M.R."/>
            <person name="Hanke G."/>
            <person name="Grimm B."/>
        </authorList>
    </citation>
    <scope>FUNCTION</scope>
    <scope>INTERACTION WITH YCF54</scope>
    <source>
        <strain>cv. Columbia</strain>
    </source>
</reference>
<gene>
    <name evidence="8" type="primary">CRD1</name>
    <name type="synonym">ACSF</name>
    <name evidence="11 12 13" type="synonym">AT103</name>
    <name evidence="9 10" type="synonym">CHL27</name>
    <name evidence="12" type="synonym">ZIP</name>
    <name evidence="16" type="ordered locus">At3g56940</name>
    <name evidence="17" type="ORF">F24I3.20</name>
</gene>
<accession>Q9M591</accession>
<accession>O04051</accession>
<accession>Q38892</accession>
<accession>Q8GUS3</accession>
<accession>Q9M1K4</accession>
<sequence length="409" mass="47631">MAAEMALVKPISKFSSPKLSNPSKFLSGRRFSTVIRMSASSSPPPPTTATSKSKKGTKKEIQESLLTPRFYTTDFEEMEQLFNTEINKNLNEAEFEALLQEFKTDYNQTHFVRNKEFKEAADKLQGPLRQIFVEFLERSCTAEFSGFLLYKELGRRLKKTNPVVAEIFSLMSRDEARHAGFLNKGLSDFNLALDLGFLTKARKYTFFKPKFIFYATYLSEKIGYWRYITIYRHLKENPEFQCYPIFKYFENWCQDENRHGDFFSALMKAQPQFLNDWQAKLWSRFFCLSVYVTMYLNDCQRTNFYEGIGLNTKEFDMHVIIETNRTTARIFPAVLDVENPEFKRKLDRMVVSYEKLLAIGETDDASFIKTLKRIPLVTSLASEILAAYLMPPVESGSVDFAEFEPNLVY</sequence>